<accession>Q8EQV3</accession>
<name>RS2_OCEIH</name>
<proteinExistence type="inferred from homology"/>
<reference key="1">
    <citation type="journal article" date="2002" name="Nucleic Acids Res.">
        <title>Genome sequence of Oceanobacillus iheyensis isolated from the Iheya Ridge and its unexpected adaptive capabilities to extreme environments.</title>
        <authorList>
            <person name="Takami H."/>
            <person name="Takaki Y."/>
            <person name="Uchiyama I."/>
        </authorList>
    </citation>
    <scope>NUCLEOTIDE SEQUENCE [LARGE SCALE GENOMIC DNA]</scope>
    <source>
        <strain>DSM 14371 / CIP 107618 / JCM 11309 / KCTC 3954 / HTE831</strain>
    </source>
</reference>
<feature type="chain" id="PRO_0000134208" description="Small ribosomal subunit protein uS2">
    <location>
        <begin position="1"/>
        <end position="254"/>
    </location>
</feature>
<sequence length="254" mass="28853">MAAISMKQLLEAGVHFGHQTRRWNPKMKKYIFTERNGIYIIDLQKTVKKVDEAYNYVKEIASNGGTILFVGTKKQAQDSVRDEAIRSGMYFVNQRWLGGTLTNFQTIRKRINRLKSIEKMEEDGTFEVLPKKEVVNLLKEKERLVKFLGGIKEMNKLPDALFVIDPRKERIAIAEAHKLNIPIIGIVDTNCDPDEIDYVIPANDDAIRAVKLLTSKMADAILEVKQGEETEVVEEEANEAVAEEEAAEEVSTQE</sequence>
<keyword id="KW-1185">Reference proteome</keyword>
<keyword id="KW-0687">Ribonucleoprotein</keyword>
<keyword id="KW-0689">Ribosomal protein</keyword>
<evidence type="ECO:0000255" key="1">
    <source>
        <dbReference type="HAMAP-Rule" id="MF_00291"/>
    </source>
</evidence>
<evidence type="ECO:0000305" key="2"/>
<organism>
    <name type="scientific">Oceanobacillus iheyensis (strain DSM 14371 / CIP 107618 / JCM 11309 / KCTC 3954 / HTE831)</name>
    <dbReference type="NCBI Taxonomy" id="221109"/>
    <lineage>
        <taxon>Bacteria</taxon>
        <taxon>Bacillati</taxon>
        <taxon>Bacillota</taxon>
        <taxon>Bacilli</taxon>
        <taxon>Bacillales</taxon>
        <taxon>Bacillaceae</taxon>
        <taxon>Oceanobacillus</taxon>
    </lineage>
</organism>
<comment type="similarity">
    <text evidence="1">Belongs to the universal ribosomal protein uS2 family.</text>
</comment>
<dbReference type="EMBL" id="BA000028">
    <property type="protein sequence ID" value="BAC13542.1"/>
    <property type="molecule type" value="Genomic_DNA"/>
</dbReference>
<dbReference type="RefSeq" id="WP_011065986.1">
    <property type="nucleotide sequence ID" value="NC_004193.1"/>
</dbReference>
<dbReference type="SMR" id="Q8EQV3"/>
<dbReference type="STRING" id="221109.gene:10733826"/>
<dbReference type="KEGG" id="oih:OB1586"/>
<dbReference type="eggNOG" id="COG0052">
    <property type="taxonomic scope" value="Bacteria"/>
</dbReference>
<dbReference type="HOGENOM" id="CLU_040318_1_2_9"/>
<dbReference type="OrthoDB" id="9808036at2"/>
<dbReference type="PhylomeDB" id="Q8EQV3"/>
<dbReference type="Proteomes" id="UP000000822">
    <property type="component" value="Chromosome"/>
</dbReference>
<dbReference type="GO" id="GO:0022627">
    <property type="term" value="C:cytosolic small ribosomal subunit"/>
    <property type="evidence" value="ECO:0007669"/>
    <property type="project" value="TreeGrafter"/>
</dbReference>
<dbReference type="GO" id="GO:0003735">
    <property type="term" value="F:structural constituent of ribosome"/>
    <property type="evidence" value="ECO:0007669"/>
    <property type="project" value="InterPro"/>
</dbReference>
<dbReference type="GO" id="GO:0006412">
    <property type="term" value="P:translation"/>
    <property type="evidence" value="ECO:0007669"/>
    <property type="project" value="UniProtKB-UniRule"/>
</dbReference>
<dbReference type="CDD" id="cd01425">
    <property type="entry name" value="RPS2"/>
    <property type="match status" value="1"/>
</dbReference>
<dbReference type="FunFam" id="1.10.287.610:FF:000001">
    <property type="entry name" value="30S ribosomal protein S2"/>
    <property type="match status" value="1"/>
</dbReference>
<dbReference type="Gene3D" id="3.40.50.10490">
    <property type="entry name" value="Glucose-6-phosphate isomerase like protein, domain 1"/>
    <property type="match status" value="1"/>
</dbReference>
<dbReference type="Gene3D" id="1.10.287.610">
    <property type="entry name" value="Helix hairpin bin"/>
    <property type="match status" value="1"/>
</dbReference>
<dbReference type="HAMAP" id="MF_00291_B">
    <property type="entry name" value="Ribosomal_uS2_B"/>
    <property type="match status" value="1"/>
</dbReference>
<dbReference type="InterPro" id="IPR001865">
    <property type="entry name" value="Ribosomal_uS2"/>
</dbReference>
<dbReference type="InterPro" id="IPR005706">
    <property type="entry name" value="Ribosomal_uS2_bac/mit/plastid"/>
</dbReference>
<dbReference type="InterPro" id="IPR018130">
    <property type="entry name" value="Ribosomal_uS2_CS"/>
</dbReference>
<dbReference type="InterPro" id="IPR023591">
    <property type="entry name" value="Ribosomal_uS2_flav_dom_sf"/>
</dbReference>
<dbReference type="NCBIfam" id="TIGR01011">
    <property type="entry name" value="rpsB_bact"/>
    <property type="match status" value="1"/>
</dbReference>
<dbReference type="PANTHER" id="PTHR12534">
    <property type="entry name" value="30S RIBOSOMAL PROTEIN S2 PROKARYOTIC AND ORGANELLAR"/>
    <property type="match status" value="1"/>
</dbReference>
<dbReference type="PANTHER" id="PTHR12534:SF0">
    <property type="entry name" value="SMALL RIBOSOMAL SUBUNIT PROTEIN US2M"/>
    <property type="match status" value="1"/>
</dbReference>
<dbReference type="Pfam" id="PF00318">
    <property type="entry name" value="Ribosomal_S2"/>
    <property type="match status" value="1"/>
</dbReference>
<dbReference type="PRINTS" id="PR00395">
    <property type="entry name" value="RIBOSOMALS2"/>
</dbReference>
<dbReference type="SUPFAM" id="SSF52313">
    <property type="entry name" value="Ribosomal protein S2"/>
    <property type="match status" value="1"/>
</dbReference>
<dbReference type="PROSITE" id="PS00962">
    <property type="entry name" value="RIBOSOMAL_S2_1"/>
    <property type="match status" value="1"/>
</dbReference>
<dbReference type="PROSITE" id="PS00963">
    <property type="entry name" value="RIBOSOMAL_S2_2"/>
    <property type="match status" value="1"/>
</dbReference>
<gene>
    <name evidence="1" type="primary">rpsB</name>
    <name type="ordered locus">OB1586</name>
</gene>
<protein>
    <recommendedName>
        <fullName evidence="1">Small ribosomal subunit protein uS2</fullName>
    </recommendedName>
    <alternativeName>
        <fullName evidence="2">30S ribosomal protein S2</fullName>
    </alternativeName>
</protein>